<accession>A6WHU6</accession>
<gene>
    <name evidence="1" type="primary">rpmD</name>
    <name type="ordered locus">Shew185_0214</name>
</gene>
<sequence length="60" mass="6683">MATKTVKVTQTKSGIGRLPKHRATLTGLGLRRIGHTVELEDTPSVRGMINKVYYMVKVED</sequence>
<reference key="1">
    <citation type="submission" date="2007-07" db="EMBL/GenBank/DDBJ databases">
        <title>Complete sequence of chromosome of Shewanella baltica OS185.</title>
        <authorList>
            <consortium name="US DOE Joint Genome Institute"/>
            <person name="Copeland A."/>
            <person name="Lucas S."/>
            <person name="Lapidus A."/>
            <person name="Barry K."/>
            <person name="Glavina del Rio T."/>
            <person name="Dalin E."/>
            <person name="Tice H."/>
            <person name="Pitluck S."/>
            <person name="Sims D."/>
            <person name="Brettin T."/>
            <person name="Bruce D."/>
            <person name="Detter J.C."/>
            <person name="Han C."/>
            <person name="Schmutz J."/>
            <person name="Larimer F."/>
            <person name="Land M."/>
            <person name="Hauser L."/>
            <person name="Kyrpides N."/>
            <person name="Mikhailova N."/>
            <person name="Brettar I."/>
            <person name="Rodrigues J."/>
            <person name="Konstantinidis K."/>
            <person name="Tiedje J."/>
            <person name="Richardson P."/>
        </authorList>
    </citation>
    <scope>NUCLEOTIDE SEQUENCE [LARGE SCALE GENOMIC DNA]</scope>
    <source>
        <strain>OS185</strain>
    </source>
</reference>
<comment type="subunit">
    <text evidence="1">Part of the 50S ribosomal subunit.</text>
</comment>
<comment type="similarity">
    <text evidence="1">Belongs to the universal ribosomal protein uL30 family.</text>
</comment>
<evidence type="ECO:0000255" key="1">
    <source>
        <dbReference type="HAMAP-Rule" id="MF_01371"/>
    </source>
</evidence>
<evidence type="ECO:0000305" key="2"/>
<organism>
    <name type="scientific">Shewanella baltica (strain OS185)</name>
    <dbReference type="NCBI Taxonomy" id="402882"/>
    <lineage>
        <taxon>Bacteria</taxon>
        <taxon>Pseudomonadati</taxon>
        <taxon>Pseudomonadota</taxon>
        <taxon>Gammaproteobacteria</taxon>
        <taxon>Alteromonadales</taxon>
        <taxon>Shewanellaceae</taxon>
        <taxon>Shewanella</taxon>
    </lineage>
</organism>
<feature type="chain" id="PRO_1000056106" description="Large ribosomal subunit protein uL30">
    <location>
        <begin position="1"/>
        <end position="60"/>
    </location>
</feature>
<proteinExistence type="inferred from homology"/>
<keyword id="KW-0687">Ribonucleoprotein</keyword>
<keyword id="KW-0689">Ribosomal protein</keyword>
<dbReference type="EMBL" id="CP000753">
    <property type="protein sequence ID" value="ABS06385.1"/>
    <property type="molecule type" value="Genomic_DNA"/>
</dbReference>
<dbReference type="RefSeq" id="WP_006083582.1">
    <property type="nucleotide sequence ID" value="NC_009665.1"/>
</dbReference>
<dbReference type="SMR" id="A6WHU6"/>
<dbReference type="GeneID" id="75190600"/>
<dbReference type="KEGG" id="sbm:Shew185_0214"/>
<dbReference type="HOGENOM" id="CLU_131047_1_4_6"/>
<dbReference type="GO" id="GO:0022625">
    <property type="term" value="C:cytosolic large ribosomal subunit"/>
    <property type="evidence" value="ECO:0007669"/>
    <property type="project" value="TreeGrafter"/>
</dbReference>
<dbReference type="GO" id="GO:0003735">
    <property type="term" value="F:structural constituent of ribosome"/>
    <property type="evidence" value="ECO:0007669"/>
    <property type="project" value="InterPro"/>
</dbReference>
<dbReference type="GO" id="GO:0006412">
    <property type="term" value="P:translation"/>
    <property type="evidence" value="ECO:0007669"/>
    <property type="project" value="UniProtKB-UniRule"/>
</dbReference>
<dbReference type="CDD" id="cd01658">
    <property type="entry name" value="Ribosomal_L30"/>
    <property type="match status" value="1"/>
</dbReference>
<dbReference type="FunFam" id="3.30.1390.20:FF:000001">
    <property type="entry name" value="50S ribosomal protein L30"/>
    <property type="match status" value="1"/>
</dbReference>
<dbReference type="Gene3D" id="3.30.1390.20">
    <property type="entry name" value="Ribosomal protein L30, ferredoxin-like fold domain"/>
    <property type="match status" value="1"/>
</dbReference>
<dbReference type="HAMAP" id="MF_01371_B">
    <property type="entry name" value="Ribosomal_uL30_B"/>
    <property type="match status" value="1"/>
</dbReference>
<dbReference type="InterPro" id="IPR036919">
    <property type="entry name" value="Ribo_uL30_ferredoxin-like_sf"/>
</dbReference>
<dbReference type="InterPro" id="IPR005996">
    <property type="entry name" value="Ribosomal_uL30_bac-type"/>
</dbReference>
<dbReference type="InterPro" id="IPR018038">
    <property type="entry name" value="Ribosomal_uL30_CS"/>
</dbReference>
<dbReference type="InterPro" id="IPR016082">
    <property type="entry name" value="Ribosomal_uL30_ferredoxin-like"/>
</dbReference>
<dbReference type="NCBIfam" id="TIGR01308">
    <property type="entry name" value="rpmD_bact"/>
    <property type="match status" value="1"/>
</dbReference>
<dbReference type="PANTHER" id="PTHR15892:SF2">
    <property type="entry name" value="LARGE RIBOSOMAL SUBUNIT PROTEIN UL30M"/>
    <property type="match status" value="1"/>
</dbReference>
<dbReference type="PANTHER" id="PTHR15892">
    <property type="entry name" value="MITOCHONDRIAL RIBOSOMAL PROTEIN L30"/>
    <property type="match status" value="1"/>
</dbReference>
<dbReference type="Pfam" id="PF00327">
    <property type="entry name" value="Ribosomal_L30"/>
    <property type="match status" value="1"/>
</dbReference>
<dbReference type="PIRSF" id="PIRSF002211">
    <property type="entry name" value="Ribosomal_L30_bac-type"/>
    <property type="match status" value="1"/>
</dbReference>
<dbReference type="SUPFAM" id="SSF55129">
    <property type="entry name" value="Ribosomal protein L30p/L7e"/>
    <property type="match status" value="1"/>
</dbReference>
<dbReference type="PROSITE" id="PS00634">
    <property type="entry name" value="RIBOSOMAL_L30"/>
    <property type="match status" value="1"/>
</dbReference>
<protein>
    <recommendedName>
        <fullName evidence="1">Large ribosomal subunit protein uL30</fullName>
    </recommendedName>
    <alternativeName>
        <fullName evidence="2">50S ribosomal protein L30</fullName>
    </alternativeName>
</protein>
<name>RL30_SHEB8</name>